<reference evidence="5" key="1">
    <citation type="submission" date="2004-10" db="EMBL/GenBank/DDBJ databases">
        <authorList>
            <consortium name="NIH - Xenopus Gene Collection (XGC) project"/>
        </authorList>
    </citation>
    <scope>NUCLEOTIDE SEQUENCE [LARGE SCALE MRNA]</scope>
    <source>
        <tissue evidence="5">Ovary</tissue>
    </source>
</reference>
<accession>Q5XGY9</accession>
<feature type="chain" id="PRO_0000318084" description="Meiotic nuclear division protein 1 homolog">
    <location>
        <begin position="1"/>
        <end position="205"/>
    </location>
</feature>
<feature type="coiled-coil region" evidence="3">
    <location>
        <begin position="79"/>
        <end position="147"/>
    </location>
</feature>
<evidence type="ECO:0000250" key="1"/>
<evidence type="ECO:0000250" key="2">
    <source>
        <dbReference type="UniProtKB" id="Q9BWT6"/>
    </source>
</evidence>
<evidence type="ECO:0000255" key="3"/>
<evidence type="ECO:0000305" key="4"/>
<evidence type="ECO:0000312" key="5">
    <source>
        <dbReference type="EMBL" id="AAH84288.1"/>
    </source>
</evidence>
<proteinExistence type="evidence at transcript level"/>
<sequence>MSKKRGLSVEEKRTRMMEIFFETKDVFQLKDLEKIAPKEKGITSMSVKEILQSLVDDGMVDSERIGTSNYFWAFPSKALHARKRKLETLEAQFTEVKQKKESLQQCVDKAKVGRQDTEERSKLVEELASLRHRKEELCADLEKYKECDPDVVEEIRQSNKVAKDAVNRWTDNIFAVKSWAKKKFGFEERQIDKNFGIPEDFDYID</sequence>
<keyword id="KW-0175">Coiled coil</keyword>
<keyword id="KW-0233">DNA recombination</keyword>
<keyword id="KW-0469">Meiosis</keyword>
<keyword id="KW-0539">Nucleus</keyword>
<keyword id="KW-1185">Reference proteome</keyword>
<name>MND1_XENLA</name>
<dbReference type="EMBL" id="BC084288">
    <property type="protein sequence ID" value="AAH84288.1"/>
    <property type="molecule type" value="mRNA"/>
</dbReference>
<dbReference type="SMR" id="Q5XGY9"/>
<dbReference type="BioGRID" id="105193">
    <property type="interactions" value="1"/>
</dbReference>
<dbReference type="GeneID" id="108699336"/>
<dbReference type="KEGG" id="xla:108699336"/>
<dbReference type="AGR" id="Xenbase:XB-GENE-950999"/>
<dbReference type="OMA" id="VCYWAFP"/>
<dbReference type="OrthoDB" id="273345at2759"/>
<dbReference type="Proteomes" id="UP000186698">
    <property type="component" value="Chromosome 1L"/>
</dbReference>
<dbReference type="Bgee" id="108699336">
    <property type="expression patterns" value="Expressed in oocyte and 18 other cell types or tissues"/>
</dbReference>
<dbReference type="GO" id="GO:0005634">
    <property type="term" value="C:nucleus"/>
    <property type="evidence" value="ECO:0007669"/>
    <property type="project" value="UniProtKB-SubCell"/>
</dbReference>
<dbReference type="GO" id="GO:0003690">
    <property type="term" value="F:double-stranded DNA binding"/>
    <property type="evidence" value="ECO:0007669"/>
    <property type="project" value="InterPro"/>
</dbReference>
<dbReference type="GO" id="GO:0007131">
    <property type="term" value="P:reciprocal meiotic recombination"/>
    <property type="evidence" value="ECO:0007669"/>
    <property type="project" value="InterPro"/>
</dbReference>
<dbReference type="InterPro" id="IPR040661">
    <property type="entry name" value="LZ3wCH"/>
</dbReference>
<dbReference type="InterPro" id="IPR005647">
    <property type="entry name" value="Mnd1"/>
</dbReference>
<dbReference type="InterPro" id="IPR040453">
    <property type="entry name" value="Mnd1_HTH"/>
</dbReference>
<dbReference type="PANTHER" id="PTHR31398">
    <property type="entry name" value="MEIOTIC NUCLEAR DIVISION PROTEIN 1 HOMOLOG"/>
    <property type="match status" value="1"/>
</dbReference>
<dbReference type="PANTHER" id="PTHR31398:SF0">
    <property type="entry name" value="MEIOTIC NUCLEAR DIVISION PROTEIN 1 HOMOLOG"/>
    <property type="match status" value="1"/>
</dbReference>
<dbReference type="Pfam" id="PF18517">
    <property type="entry name" value="LZ3wCH"/>
    <property type="match status" value="1"/>
</dbReference>
<dbReference type="Pfam" id="PF03962">
    <property type="entry name" value="Mnd1"/>
    <property type="match status" value="1"/>
</dbReference>
<dbReference type="PIRSF" id="PIRSF026991">
    <property type="entry name" value="Mnd1"/>
    <property type="match status" value="1"/>
</dbReference>
<gene>
    <name evidence="2" type="primary">mnd1</name>
</gene>
<organism>
    <name type="scientific">Xenopus laevis</name>
    <name type="common">African clawed frog</name>
    <dbReference type="NCBI Taxonomy" id="8355"/>
    <lineage>
        <taxon>Eukaryota</taxon>
        <taxon>Metazoa</taxon>
        <taxon>Chordata</taxon>
        <taxon>Craniata</taxon>
        <taxon>Vertebrata</taxon>
        <taxon>Euteleostomi</taxon>
        <taxon>Amphibia</taxon>
        <taxon>Batrachia</taxon>
        <taxon>Anura</taxon>
        <taxon>Pipoidea</taxon>
        <taxon>Pipidae</taxon>
        <taxon>Xenopodinae</taxon>
        <taxon>Xenopus</taxon>
        <taxon>Xenopus</taxon>
    </lineage>
</organism>
<comment type="function">
    <text evidence="1">Required for proper homologous chromosome pairing and efficient cross-over and intragenic recombination during meiosis. Stimulates both dmc1- and rad51-mediated homologous strand assimilation, which is required for the resolution of meiotic double-strand breaks (By similarity).</text>
</comment>
<comment type="subcellular location">
    <subcellularLocation>
        <location evidence="4">Nucleus</location>
    </subcellularLocation>
</comment>
<comment type="similarity">
    <text evidence="4">Belongs to the MND1 family.</text>
</comment>
<protein>
    <recommendedName>
        <fullName>Meiotic nuclear division protein 1 homolog</fullName>
    </recommendedName>
</protein>